<keyword id="KW-0012">Acyltransferase</keyword>
<keyword id="KW-0056">Arginine metabolism</keyword>
<keyword id="KW-0808">Transferase</keyword>
<name>ASTA_ECO8A</name>
<reference key="1">
    <citation type="journal article" date="2009" name="PLoS Genet.">
        <title>Organised genome dynamics in the Escherichia coli species results in highly diverse adaptive paths.</title>
        <authorList>
            <person name="Touchon M."/>
            <person name="Hoede C."/>
            <person name="Tenaillon O."/>
            <person name="Barbe V."/>
            <person name="Baeriswyl S."/>
            <person name="Bidet P."/>
            <person name="Bingen E."/>
            <person name="Bonacorsi S."/>
            <person name="Bouchier C."/>
            <person name="Bouvet O."/>
            <person name="Calteau A."/>
            <person name="Chiapello H."/>
            <person name="Clermont O."/>
            <person name="Cruveiller S."/>
            <person name="Danchin A."/>
            <person name="Diard M."/>
            <person name="Dossat C."/>
            <person name="Karoui M.E."/>
            <person name="Frapy E."/>
            <person name="Garry L."/>
            <person name="Ghigo J.M."/>
            <person name="Gilles A.M."/>
            <person name="Johnson J."/>
            <person name="Le Bouguenec C."/>
            <person name="Lescat M."/>
            <person name="Mangenot S."/>
            <person name="Martinez-Jehanne V."/>
            <person name="Matic I."/>
            <person name="Nassif X."/>
            <person name="Oztas S."/>
            <person name="Petit M.A."/>
            <person name="Pichon C."/>
            <person name="Rouy Z."/>
            <person name="Ruf C.S."/>
            <person name="Schneider D."/>
            <person name="Tourret J."/>
            <person name="Vacherie B."/>
            <person name="Vallenet D."/>
            <person name="Medigue C."/>
            <person name="Rocha E.P.C."/>
            <person name="Denamur E."/>
        </authorList>
    </citation>
    <scope>NUCLEOTIDE SEQUENCE [LARGE SCALE GENOMIC DNA]</scope>
    <source>
        <strain>IAI1</strain>
    </source>
</reference>
<gene>
    <name evidence="1" type="primary">astA</name>
    <name type="ordered locus">ECIAI1_1808</name>
</gene>
<proteinExistence type="inferred from homology"/>
<evidence type="ECO:0000255" key="1">
    <source>
        <dbReference type="HAMAP-Rule" id="MF_01171"/>
    </source>
</evidence>
<sequence>MMVIRPVERSDVSALMQLASKTGGGLTSLPANEATLSARIERAIKTWQGELPKSEQGYVFVLEDSETGTVAGICAIEVAVGLNDPWYNYRVGTLVHASKELNVYNALPTLFLSNDHTGSSELCTLFLDPDWRKEGNGYLLSKSRFMFMAAFRDKFNDKVVAEMRGVIDEHGYSPFWQSLGKRFFSMDFSRADFLCGTGQKAFIAELMPKHPIYTHFLSQEAQDVIGQVHPQTAPARAVLEKEGFRYRNYIDIFDGGPTLECDIDRVRAIRKSRLVEVAEGQPAQGDFPACLVANENYHHFRVVLARTDPATERLILTAAQLDALKCHAGDRVRLVRLCAEEKTA</sequence>
<feature type="chain" id="PRO_1000137978" description="Arginine N-succinyltransferase">
    <location>
        <begin position="1"/>
        <end position="344"/>
    </location>
</feature>
<feature type="active site" description="Proton donor" evidence="1">
    <location>
        <position position="229"/>
    </location>
</feature>
<feature type="binding site" evidence="1">
    <location>
        <position position="125"/>
    </location>
    <ligand>
        <name>succinyl-CoA</name>
        <dbReference type="ChEBI" id="CHEBI:57292"/>
    </ligand>
</feature>
<comment type="function">
    <text evidence="1">Catalyzes the transfer of succinyl-CoA to arginine to produce N(2)-succinylarginine.</text>
</comment>
<comment type="catalytic activity">
    <reaction evidence="1">
        <text>succinyl-CoA + L-arginine = N(2)-succinyl-L-arginine + CoA + H(+)</text>
        <dbReference type="Rhea" id="RHEA:15185"/>
        <dbReference type="ChEBI" id="CHEBI:15378"/>
        <dbReference type="ChEBI" id="CHEBI:32682"/>
        <dbReference type="ChEBI" id="CHEBI:57287"/>
        <dbReference type="ChEBI" id="CHEBI:57292"/>
        <dbReference type="ChEBI" id="CHEBI:58241"/>
        <dbReference type="EC" id="2.3.1.109"/>
    </reaction>
</comment>
<comment type="pathway">
    <text evidence="1">Amino-acid degradation; L-arginine degradation via AST pathway; L-glutamate and succinate from L-arginine: step 1/5.</text>
</comment>
<comment type="similarity">
    <text evidence="1">Belongs to the arginine N-succinyltransferase family.</text>
</comment>
<accession>B7M1F9</accession>
<organism>
    <name type="scientific">Escherichia coli O8 (strain IAI1)</name>
    <dbReference type="NCBI Taxonomy" id="585034"/>
    <lineage>
        <taxon>Bacteria</taxon>
        <taxon>Pseudomonadati</taxon>
        <taxon>Pseudomonadota</taxon>
        <taxon>Gammaproteobacteria</taxon>
        <taxon>Enterobacterales</taxon>
        <taxon>Enterobacteriaceae</taxon>
        <taxon>Escherichia</taxon>
    </lineage>
</organism>
<protein>
    <recommendedName>
        <fullName evidence="1">Arginine N-succinyltransferase</fullName>
        <shortName evidence="1">AST</shortName>
        <ecNumber evidence="1">2.3.1.109</ecNumber>
    </recommendedName>
    <alternativeName>
        <fullName evidence="1">AOST</fullName>
    </alternativeName>
</protein>
<dbReference type="EC" id="2.3.1.109" evidence="1"/>
<dbReference type="EMBL" id="CU928160">
    <property type="protein sequence ID" value="CAQ98664.1"/>
    <property type="molecule type" value="Genomic_DNA"/>
</dbReference>
<dbReference type="RefSeq" id="WP_000989414.1">
    <property type="nucleotide sequence ID" value="NC_011741.1"/>
</dbReference>
<dbReference type="SMR" id="B7M1F9"/>
<dbReference type="GeneID" id="75203053"/>
<dbReference type="KEGG" id="ecr:ECIAI1_1808"/>
<dbReference type="HOGENOM" id="CLU_057655_0_0_6"/>
<dbReference type="UniPathway" id="UPA00185">
    <property type="reaction ID" value="UER00279"/>
</dbReference>
<dbReference type="GO" id="GO:0008791">
    <property type="term" value="F:arginine N-succinyltransferase activity"/>
    <property type="evidence" value="ECO:0007669"/>
    <property type="project" value="UniProtKB-UniRule"/>
</dbReference>
<dbReference type="GO" id="GO:0019544">
    <property type="term" value="P:arginine catabolic process to glutamate"/>
    <property type="evidence" value="ECO:0007669"/>
    <property type="project" value="UniProtKB-UniRule"/>
</dbReference>
<dbReference type="GO" id="GO:0019545">
    <property type="term" value="P:arginine catabolic process to succinate"/>
    <property type="evidence" value="ECO:0007669"/>
    <property type="project" value="UniProtKB-UniRule"/>
</dbReference>
<dbReference type="Gene3D" id="2.40.40.20">
    <property type="match status" value="1"/>
</dbReference>
<dbReference type="Gene3D" id="3.40.630.30">
    <property type="match status" value="1"/>
</dbReference>
<dbReference type="HAMAP" id="MF_01171">
    <property type="entry name" value="AstA"/>
    <property type="match status" value="1"/>
</dbReference>
<dbReference type="InterPro" id="IPR016181">
    <property type="entry name" value="Acyl_CoA_acyltransferase"/>
</dbReference>
<dbReference type="InterPro" id="IPR007041">
    <property type="entry name" value="Arg_succinylTrfase_AstA/AruG"/>
</dbReference>
<dbReference type="InterPro" id="IPR017650">
    <property type="entry name" value="Arginine_N-succinylTrfase"/>
</dbReference>
<dbReference type="NCBIfam" id="TIGR03243">
    <property type="entry name" value="arg_catab_AOST"/>
    <property type="match status" value="1"/>
</dbReference>
<dbReference type="NCBIfam" id="TIGR03244">
    <property type="entry name" value="arg_catab_AstA"/>
    <property type="match status" value="1"/>
</dbReference>
<dbReference type="NCBIfam" id="NF007770">
    <property type="entry name" value="PRK10456.1"/>
    <property type="match status" value="1"/>
</dbReference>
<dbReference type="PANTHER" id="PTHR30420:SF1">
    <property type="entry name" value="ARGININE N-SUCCINYLTRANSFERASE"/>
    <property type="match status" value="1"/>
</dbReference>
<dbReference type="PANTHER" id="PTHR30420">
    <property type="entry name" value="N-SUCCINYLARGININE DIHYDROLASE"/>
    <property type="match status" value="1"/>
</dbReference>
<dbReference type="Pfam" id="PF04958">
    <property type="entry name" value="AstA"/>
    <property type="match status" value="1"/>
</dbReference>
<dbReference type="SUPFAM" id="SSF55729">
    <property type="entry name" value="Acyl-CoA N-acyltransferases (Nat)"/>
    <property type="match status" value="1"/>
</dbReference>